<comment type="function">
    <text evidence="1">Catalyzes the isomerization between 2-isopropylmalate and 3-isopropylmalate, via the formation of 2-isopropylmaleate.</text>
</comment>
<comment type="catalytic activity">
    <reaction evidence="1">
        <text>(2R,3S)-3-isopropylmalate = (2S)-2-isopropylmalate</text>
        <dbReference type="Rhea" id="RHEA:32287"/>
        <dbReference type="ChEBI" id="CHEBI:1178"/>
        <dbReference type="ChEBI" id="CHEBI:35121"/>
        <dbReference type="EC" id="4.2.1.33"/>
    </reaction>
</comment>
<comment type="pathway">
    <text evidence="1">Amino-acid biosynthesis; L-leucine biosynthesis; L-leucine from 3-methyl-2-oxobutanoate: step 2/4.</text>
</comment>
<comment type="subunit">
    <text evidence="1">Heterodimer of LeuC and LeuD.</text>
</comment>
<comment type="similarity">
    <text evidence="1">Belongs to the LeuD family. LeuD type 1 subfamily.</text>
</comment>
<sequence length="215" mass="24371">MKAYTVEQGIVAPLDRANVDTDLIIPKQFLKSIKRTGFGDNLFDELRYLDEGYPGQDNSVRPKNPDFVLNQPRYQGATVLIARTNFGCGSSREHAPWALNEYGFRTVIAPSFADIFFNNCFKNGMLPVILPEDIVDQLFKECAAQEGYQLTIDLAAQEVRTPTGEAFKFEVDPFRKHCLLNGLDDIGLTLQNADAIRAYEEKTKQVRPWVFQEIN</sequence>
<keyword id="KW-0028">Amino-acid biosynthesis</keyword>
<keyword id="KW-0100">Branched-chain amino acid biosynthesis</keyword>
<keyword id="KW-0432">Leucine biosynthesis</keyword>
<keyword id="KW-0456">Lyase</keyword>
<name>LEUD_ACIBY</name>
<feature type="chain" id="PRO_1000135780" description="3-isopropylmalate dehydratase small subunit">
    <location>
        <begin position="1"/>
        <end position="215"/>
    </location>
</feature>
<reference key="1">
    <citation type="journal article" date="2008" name="PLoS ONE">
        <title>Comparative analysis of Acinetobacters: three genomes for three lifestyles.</title>
        <authorList>
            <person name="Vallenet D."/>
            <person name="Nordmann P."/>
            <person name="Barbe V."/>
            <person name="Poirel L."/>
            <person name="Mangenot S."/>
            <person name="Bataille E."/>
            <person name="Dossat C."/>
            <person name="Gas S."/>
            <person name="Kreimeyer A."/>
            <person name="Lenoble P."/>
            <person name="Oztas S."/>
            <person name="Poulain J."/>
            <person name="Segurens B."/>
            <person name="Robert C."/>
            <person name="Abergel C."/>
            <person name="Claverie J.-M."/>
            <person name="Raoult D."/>
            <person name="Medigue C."/>
            <person name="Weissenbach J."/>
            <person name="Cruveiller S."/>
        </authorList>
    </citation>
    <scope>NUCLEOTIDE SEQUENCE [LARGE SCALE GENOMIC DNA]</scope>
    <source>
        <strain>AYE</strain>
    </source>
</reference>
<dbReference type="EC" id="4.2.1.33" evidence="1"/>
<dbReference type="EMBL" id="CU459141">
    <property type="protein sequence ID" value="CAM88155.1"/>
    <property type="molecule type" value="Genomic_DNA"/>
</dbReference>
<dbReference type="RefSeq" id="WP_000649450.1">
    <property type="nucleotide sequence ID" value="NZ_JBDGFB010000003.1"/>
</dbReference>
<dbReference type="SMR" id="B0V4L7"/>
<dbReference type="EnsemblBacteria" id="CAM88155">
    <property type="protein sequence ID" value="CAM88155"/>
    <property type="gene ID" value="ABAYE3359"/>
</dbReference>
<dbReference type="GeneID" id="92892410"/>
<dbReference type="KEGG" id="aby:ABAYE3359"/>
<dbReference type="HOGENOM" id="CLU_081378_0_3_6"/>
<dbReference type="UniPathway" id="UPA00048">
    <property type="reaction ID" value="UER00071"/>
</dbReference>
<dbReference type="GO" id="GO:0009316">
    <property type="term" value="C:3-isopropylmalate dehydratase complex"/>
    <property type="evidence" value="ECO:0007669"/>
    <property type="project" value="InterPro"/>
</dbReference>
<dbReference type="GO" id="GO:0003861">
    <property type="term" value="F:3-isopropylmalate dehydratase activity"/>
    <property type="evidence" value="ECO:0007669"/>
    <property type="project" value="UniProtKB-UniRule"/>
</dbReference>
<dbReference type="GO" id="GO:0009098">
    <property type="term" value="P:L-leucine biosynthetic process"/>
    <property type="evidence" value="ECO:0007669"/>
    <property type="project" value="UniProtKB-UniRule"/>
</dbReference>
<dbReference type="CDD" id="cd01577">
    <property type="entry name" value="IPMI_Swivel"/>
    <property type="match status" value="1"/>
</dbReference>
<dbReference type="FunFam" id="3.20.19.10:FF:000003">
    <property type="entry name" value="3-isopropylmalate dehydratase small subunit"/>
    <property type="match status" value="1"/>
</dbReference>
<dbReference type="Gene3D" id="3.20.19.10">
    <property type="entry name" value="Aconitase, domain 4"/>
    <property type="match status" value="1"/>
</dbReference>
<dbReference type="HAMAP" id="MF_01031">
    <property type="entry name" value="LeuD_type1"/>
    <property type="match status" value="1"/>
</dbReference>
<dbReference type="InterPro" id="IPR004431">
    <property type="entry name" value="3-IsopropMal_deHydase_ssu"/>
</dbReference>
<dbReference type="InterPro" id="IPR015928">
    <property type="entry name" value="Aconitase/3IPM_dehydase_swvl"/>
</dbReference>
<dbReference type="InterPro" id="IPR000573">
    <property type="entry name" value="AconitaseA/IPMdHydase_ssu_swvl"/>
</dbReference>
<dbReference type="InterPro" id="IPR033940">
    <property type="entry name" value="IPMI_Swivel"/>
</dbReference>
<dbReference type="InterPro" id="IPR050075">
    <property type="entry name" value="LeuD"/>
</dbReference>
<dbReference type="NCBIfam" id="TIGR00171">
    <property type="entry name" value="leuD"/>
    <property type="match status" value="1"/>
</dbReference>
<dbReference type="NCBIfam" id="NF002458">
    <property type="entry name" value="PRK01641.1"/>
    <property type="match status" value="1"/>
</dbReference>
<dbReference type="PANTHER" id="PTHR43345:SF5">
    <property type="entry name" value="3-ISOPROPYLMALATE DEHYDRATASE SMALL SUBUNIT"/>
    <property type="match status" value="1"/>
</dbReference>
<dbReference type="PANTHER" id="PTHR43345">
    <property type="entry name" value="3-ISOPROPYLMALATE DEHYDRATASE SMALL SUBUNIT 2-RELATED-RELATED"/>
    <property type="match status" value="1"/>
</dbReference>
<dbReference type="Pfam" id="PF00694">
    <property type="entry name" value="Aconitase_C"/>
    <property type="match status" value="1"/>
</dbReference>
<dbReference type="SUPFAM" id="SSF52016">
    <property type="entry name" value="LeuD/IlvD-like"/>
    <property type="match status" value="1"/>
</dbReference>
<proteinExistence type="inferred from homology"/>
<accession>B0V4L7</accession>
<gene>
    <name evidence="1" type="primary">leuD</name>
    <name type="ordered locus">ABAYE3359</name>
</gene>
<organism>
    <name type="scientific">Acinetobacter baumannii (strain AYE)</name>
    <dbReference type="NCBI Taxonomy" id="509173"/>
    <lineage>
        <taxon>Bacteria</taxon>
        <taxon>Pseudomonadati</taxon>
        <taxon>Pseudomonadota</taxon>
        <taxon>Gammaproteobacteria</taxon>
        <taxon>Moraxellales</taxon>
        <taxon>Moraxellaceae</taxon>
        <taxon>Acinetobacter</taxon>
        <taxon>Acinetobacter calcoaceticus/baumannii complex</taxon>
    </lineage>
</organism>
<evidence type="ECO:0000255" key="1">
    <source>
        <dbReference type="HAMAP-Rule" id="MF_01031"/>
    </source>
</evidence>
<protein>
    <recommendedName>
        <fullName evidence="1">3-isopropylmalate dehydratase small subunit</fullName>
        <ecNumber evidence="1">4.2.1.33</ecNumber>
    </recommendedName>
    <alternativeName>
        <fullName evidence="1">Alpha-IPM isomerase</fullName>
        <shortName evidence="1">IPMI</shortName>
    </alternativeName>
    <alternativeName>
        <fullName evidence="1">Isopropylmalate isomerase</fullName>
    </alternativeName>
</protein>